<gene>
    <name evidence="8" type="primary">IFT56</name>
    <name type="synonym">TTC26</name>
</gene>
<feature type="chain" id="PRO_0000289082" description="Intraflagellar transport protein 56">
    <location>
        <begin position="1"/>
        <end position="554"/>
    </location>
</feature>
<feature type="repeat" description="TPR 1">
    <location>
        <begin position="57"/>
        <end position="90"/>
    </location>
</feature>
<feature type="repeat" description="TPR 2">
    <location>
        <begin position="92"/>
        <end position="125"/>
    </location>
</feature>
<feature type="repeat" description="TPR 3">
    <location>
        <begin position="151"/>
        <end position="184"/>
    </location>
</feature>
<feature type="repeat" description="TPR 4">
    <location>
        <begin position="468"/>
        <end position="501"/>
    </location>
</feature>
<feature type="region of interest" description="Disordered" evidence="2">
    <location>
        <begin position="1"/>
        <end position="24"/>
    </location>
</feature>
<feature type="splice variant" id="VSP_044791" description="In isoform 3." evidence="5">
    <location>
        <begin position="47"/>
        <end position="77"/>
    </location>
</feature>
<feature type="splice variant" id="VSP_043751" description="In isoform 2." evidence="6">
    <original>MGQFYYSAKAFDVLERLDPNPEYWEGKRGACVGIFQMIIAGREPKETLREVLHLLRSTGNTQVEYMIRIMKKWAKENRVSI</original>
    <variation>RDPSRSAPFTEKHR</variation>
    <location>
        <begin position="474"/>
        <end position="554"/>
    </location>
</feature>
<feature type="sequence variant" id="VAR_086383" description="In BRENS; decreased protein abundance; associated with abnormal ciliary structure and function; dbSNP:rs1794039778." evidence="3 4">
    <original>N</original>
    <variation>S</variation>
    <location>
        <position position="263"/>
    </location>
</feature>
<feature type="sequence variant" id="VAR_032568" description="In dbSNP:rs13225917.">
    <original>D</original>
    <variation>N</variation>
    <location>
        <position position="310"/>
    </location>
</feature>
<feature type="sequence variant" id="VAR_086384" description="In BRENS; uncertain significance; dbSNP:rs2130872867." evidence="3">
    <original>P</original>
    <variation>L</variation>
    <location>
        <position position="444"/>
    </location>
</feature>
<feature type="sequence conflict" description="In Ref. 1; BAB14143." evidence="7" ref="1">
    <original>K</original>
    <variation>E</variation>
    <location>
        <position position="85"/>
    </location>
</feature>
<feature type="sequence conflict" description="In Ref. 1; BAH12956." evidence="7" ref="1">
    <original>E</original>
    <variation>V</variation>
    <location>
        <position position="271"/>
    </location>
</feature>
<feature type="sequence conflict" description="In Ref. 1; BAB14143." evidence="7" ref="1">
    <original>D</original>
    <variation>V</variation>
    <location>
        <position position="470"/>
    </location>
</feature>
<sequence length="554" mass="64178">MMLSRAKPAVGRGVQHTDKRKKKGRKIPKLEELLSKRDFTGAITLLEFKRHVGEEEEDTNLWIGYCAFHLGDYKRALEEYENATKEENCNSEVWVNLACTYFFLGMYKQAEAAGFKASKSRLQNRLLFHLAHKFNDEKKLMSFHQNLQDVTEDQLSLASIHYMRSHYQEAIDIYKRILLDNREYLALNVYVALCYYKLDYYDVSQEVLAVYLQQIPDSTIALNLKACNHFRLYNGRAAEAELKSLMDNASSSFEFAKELIRHNLVVFRGGEGALQVLPPLVDVIPEARLNLVIYYLRQDDVQEAYNLIKDLEPTTPQEYILKGVVNAALGQEMGSRDHMKIAQQFFQLVGGSASECDTIPGRQCMASCFFLLKQFDDVLIYLNSFKSYFYNDDIFNFNYAQAKAATGNTSEGEEAFLLIQSEKMKNDYIYLSWLARCYIMNKKPRLAWELYLKMETSGESFSLLQLIANDCYKMGQFYYSAKAFDVLERLDPNPEYWEGKRGACVGIFQMIIAGREPKETLREVLHLLRSTGNTQVEYMIRIMKKWAKENRVSI</sequence>
<reference key="1">
    <citation type="journal article" date="2004" name="Nat. Genet.">
        <title>Complete sequencing and characterization of 21,243 full-length human cDNAs.</title>
        <authorList>
            <person name="Ota T."/>
            <person name="Suzuki Y."/>
            <person name="Nishikawa T."/>
            <person name="Otsuki T."/>
            <person name="Sugiyama T."/>
            <person name="Irie R."/>
            <person name="Wakamatsu A."/>
            <person name="Hayashi K."/>
            <person name="Sato H."/>
            <person name="Nagai K."/>
            <person name="Kimura K."/>
            <person name="Makita H."/>
            <person name="Sekine M."/>
            <person name="Obayashi M."/>
            <person name="Nishi T."/>
            <person name="Shibahara T."/>
            <person name="Tanaka T."/>
            <person name="Ishii S."/>
            <person name="Yamamoto J."/>
            <person name="Saito K."/>
            <person name="Kawai Y."/>
            <person name="Isono Y."/>
            <person name="Nakamura Y."/>
            <person name="Nagahari K."/>
            <person name="Murakami K."/>
            <person name="Yasuda T."/>
            <person name="Iwayanagi T."/>
            <person name="Wagatsuma M."/>
            <person name="Shiratori A."/>
            <person name="Sudo H."/>
            <person name="Hosoiri T."/>
            <person name="Kaku Y."/>
            <person name="Kodaira H."/>
            <person name="Kondo H."/>
            <person name="Sugawara M."/>
            <person name="Takahashi M."/>
            <person name="Kanda K."/>
            <person name="Yokoi T."/>
            <person name="Furuya T."/>
            <person name="Kikkawa E."/>
            <person name="Omura Y."/>
            <person name="Abe K."/>
            <person name="Kamihara K."/>
            <person name="Katsuta N."/>
            <person name="Sato K."/>
            <person name="Tanikawa M."/>
            <person name="Yamazaki M."/>
            <person name="Ninomiya K."/>
            <person name="Ishibashi T."/>
            <person name="Yamashita H."/>
            <person name="Murakawa K."/>
            <person name="Fujimori K."/>
            <person name="Tanai H."/>
            <person name="Kimata M."/>
            <person name="Watanabe M."/>
            <person name="Hiraoka S."/>
            <person name="Chiba Y."/>
            <person name="Ishida S."/>
            <person name="Ono Y."/>
            <person name="Takiguchi S."/>
            <person name="Watanabe S."/>
            <person name="Yosida M."/>
            <person name="Hotuta T."/>
            <person name="Kusano J."/>
            <person name="Kanehori K."/>
            <person name="Takahashi-Fujii A."/>
            <person name="Hara H."/>
            <person name="Tanase T.-O."/>
            <person name="Nomura Y."/>
            <person name="Togiya S."/>
            <person name="Komai F."/>
            <person name="Hara R."/>
            <person name="Takeuchi K."/>
            <person name="Arita M."/>
            <person name="Imose N."/>
            <person name="Musashino K."/>
            <person name="Yuuki H."/>
            <person name="Oshima A."/>
            <person name="Sasaki N."/>
            <person name="Aotsuka S."/>
            <person name="Yoshikawa Y."/>
            <person name="Matsunawa H."/>
            <person name="Ichihara T."/>
            <person name="Shiohata N."/>
            <person name="Sano S."/>
            <person name="Moriya S."/>
            <person name="Momiyama H."/>
            <person name="Satoh N."/>
            <person name="Takami S."/>
            <person name="Terashima Y."/>
            <person name="Suzuki O."/>
            <person name="Nakagawa S."/>
            <person name="Senoh A."/>
            <person name="Mizoguchi H."/>
            <person name="Goto Y."/>
            <person name="Shimizu F."/>
            <person name="Wakebe H."/>
            <person name="Hishigaki H."/>
            <person name="Watanabe T."/>
            <person name="Sugiyama A."/>
            <person name="Takemoto M."/>
            <person name="Kawakami B."/>
            <person name="Yamazaki M."/>
            <person name="Watanabe K."/>
            <person name="Kumagai A."/>
            <person name="Itakura S."/>
            <person name="Fukuzumi Y."/>
            <person name="Fujimori Y."/>
            <person name="Komiyama M."/>
            <person name="Tashiro H."/>
            <person name="Tanigami A."/>
            <person name="Fujiwara T."/>
            <person name="Ono T."/>
            <person name="Yamada K."/>
            <person name="Fujii Y."/>
            <person name="Ozaki K."/>
            <person name="Hirao M."/>
            <person name="Ohmori Y."/>
            <person name="Kawabata A."/>
            <person name="Hikiji T."/>
            <person name="Kobatake N."/>
            <person name="Inagaki H."/>
            <person name="Ikema Y."/>
            <person name="Okamoto S."/>
            <person name="Okitani R."/>
            <person name="Kawakami T."/>
            <person name="Noguchi S."/>
            <person name="Itoh T."/>
            <person name="Shigeta K."/>
            <person name="Senba T."/>
            <person name="Matsumura K."/>
            <person name="Nakajima Y."/>
            <person name="Mizuno T."/>
            <person name="Morinaga M."/>
            <person name="Sasaki M."/>
            <person name="Togashi T."/>
            <person name="Oyama M."/>
            <person name="Hata H."/>
            <person name="Watanabe M."/>
            <person name="Komatsu T."/>
            <person name="Mizushima-Sugano J."/>
            <person name="Satoh T."/>
            <person name="Shirai Y."/>
            <person name="Takahashi Y."/>
            <person name="Nakagawa K."/>
            <person name="Okumura K."/>
            <person name="Nagase T."/>
            <person name="Nomura N."/>
            <person name="Kikuchi H."/>
            <person name="Masuho Y."/>
            <person name="Yamashita R."/>
            <person name="Nakai K."/>
            <person name="Yada T."/>
            <person name="Nakamura Y."/>
            <person name="Ohara O."/>
            <person name="Isogai T."/>
            <person name="Sugano S."/>
        </authorList>
    </citation>
    <scope>NUCLEOTIDE SEQUENCE [LARGE SCALE MRNA] (ISOFORMS 1 AND 3)</scope>
</reference>
<reference key="2">
    <citation type="journal article" date="2003" name="Science">
        <title>Human chromosome 7: DNA sequence and biology.</title>
        <authorList>
            <person name="Scherer S.W."/>
            <person name="Cheung J."/>
            <person name="MacDonald J.R."/>
            <person name="Osborne L.R."/>
            <person name="Nakabayashi K."/>
            <person name="Herbrick J.-A."/>
            <person name="Carson A.R."/>
            <person name="Parker-Katiraee L."/>
            <person name="Skaug J."/>
            <person name="Khaja R."/>
            <person name="Zhang J."/>
            <person name="Hudek A.K."/>
            <person name="Li M."/>
            <person name="Haddad M."/>
            <person name="Duggan G.E."/>
            <person name="Fernandez B.A."/>
            <person name="Kanematsu E."/>
            <person name="Gentles S."/>
            <person name="Christopoulos C.C."/>
            <person name="Choufani S."/>
            <person name="Kwasnicka D."/>
            <person name="Zheng X.H."/>
            <person name="Lai Z."/>
            <person name="Nusskern D.R."/>
            <person name="Zhang Q."/>
            <person name="Gu Z."/>
            <person name="Lu F."/>
            <person name="Zeesman S."/>
            <person name="Nowaczyk M.J."/>
            <person name="Teshima I."/>
            <person name="Chitayat D."/>
            <person name="Shuman C."/>
            <person name="Weksberg R."/>
            <person name="Zackai E.H."/>
            <person name="Grebe T.A."/>
            <person name="Cox S.R."/>
            <person name="Kirkpatrick S.J."/>
            <person name="Rahman N."/>
            <person name="Friedman J.M."/>
            <person name="Heng H.H.Q."/>
            <person name="Pelicci P.G."/>
            <person name="Lo-Coco F."/>
            <person name="Belloni E."/>
            <person name="Shaffer L.G."/>
            <person name="Pober B."/>
            <person name="Morton C.C."/>
            <person name="Gusella J.F."/>
            <person name="Bruns G.A.P."/>
            <person name="Korf B.R."/>
            <person name="Quade B.J."/>
            <person name="Ligon A.H."/>
            <person name="Ferguson H."/>
            <person name="Higgins A.W."/>
            <person name="Leach N.T."/>
            <person name="Herrick S.R."/>
            <person name="Lemyre E."/>
            <person name="Farra C.G."/>
            <person name="Kim H.-G."/>
            <person name="Summers A.M."/>
            <person name="Gripp K.W."/>
            <person name="Roberts W."/>
            <person name="Szatmari P."/>
            <person name="Winsor E.J.T."/>
            <person name="Grzeschik K.-H."/>
            <person name="Teebi A."/>
            <person name="Minassian B.A."/>
            <person name="Kere J."/>
            <person name="Armengol L."/>
            <person name="Pujana M.A."/>
            <person name="Estivill X."/>
            <person name="Wilson M.D."/>
            <person name="Koop B.F."/>
            <person name="Tosi S."/>
            <person name="Moore G.E."/>
            <person name="Boright A.P."/>
            <person name="Zlotorynski E."/>
            <person name="Kerem B."/>
            <person name="Kroisel P.M."/>
            <person name="Petek E."/>
            <person name="Oscier D.G."/>
            <person name="Mould S.J."/>
            <person name="Doehner H."/>
            <person name="Doehner K."/>
            <person name="Rommens J.M."/>
            <person name="Vincent J.B."/>
            <person name="Venter J.C."/>
            <person name="Li P.W."/>
            <person name="Mural R.J."/>
            <person name="Adams M.D."/>
            <person name="Tsui L.-C."/>
        </authorList>
    </citation>
    <scope>NUCLEOTIDE SEQUENCE [LARGE SCALE GENOMIC DNA]</scope>
</reference>
<reference key="3">
    <citation type="journal article" date="2003" name="Nature">
        <title>The DNA sequence of human chromosome 7.</title>
        <authorList>
            <person name="Hillier L.W."/>
            <person name="Fulton R.S."/>
            <person name="Fulton L.A."/>
            <person name="Graves T.A."/>
            <person name="Pepin K.H."/>
            <person name="Wagner-McPherson C."/>
            <person name="Layman D."/>
            <person name="Maas J."/>
            <person name="Jaeger S."/>
            <person name="Walker R."/>
            <person name="Wylie K."/>
            <person name="Sekhon M."/>
            <person name="Becker M.C."/>
            <person name="O'Laughlin M.D."/>
            <person name="Schaller M.E."/>
            <person name="Fewell G.A."/>
            <person name="Delehaunty K.D."/>
            <person name="Miner T.L."/>
            <person name="Nash W.E."/>
            <person name="Cordes M."/>
            <person name="Du H."/>
            <person name="Sun H."/>
            <person name="Edwards J."/>
            <person name="Bradshaw-Cordum H."/>
            <person name="Ali J."/>
            <person name="Andrews S."/>
            <person name="Isak A."/>
            <person name="Vanbrunt A."/>
            <person name="Nguyen C."/>
            <person name="Du F."/>
            <person name="Lamar B."/>
            <person name="Courtney L."/>
            <person name="Kalicki J."/>
            <person name="Ozersky P."/>
            <person name="Bielicki L."/>
            <person name="Scott K."/>
            <person name="Holmes A."/>
            <person name="Harkins R."/>
            <person name="Harris A."/>
            <person name="Strong C.M."/>
            <person name="Hou S."/>
            <person name="Tomlinson C."/>
            <person name="Dauphin-Kohlberg S."/>
            <person name="Kozlowicz-Reilly A."/>
            <person name="Leonard S."/>
            <person name="Rohlfing T."/>
            <person name="Rock S.M."/>
            <person name="Tin-Wollam A.-M."/>
            <person name="Abbott A."/>
            <person name="Minx P."/>
            <person name="Maupin R."/>
            <person name="Strowmatt C."/>
            <person name="Latreille P."/>
            <person name="Miller N."/>
            <person name="Johnson D."/>
            <person name="Murray J."/>
            <person name="Woessner J.P."/>
            <person name="Wendl M.C."/>
            <person name="Yang S.-P."/>
            <person name="Schultz B.R."/>
            <person name="Wallis J.W."/>
            <person name="Spieth J."/>
            <person name="Bieri T.A."/>
            <person name="Nelson J.O."/>
            <person name="Berkowicz N."/>
            <person name="Wohldmann P.E."/>
            <person name="Cook L.L."/>
            <person name="Hickenbotham M.T."/>
            <person name="Eldred J."/>
            <person name="Williams D."/>
            <person name="Bedell J.A."/>
            <person name="Mardis E.R."/>
            <person name="Clifton S.W."/>
            <person name="Chissoe S.L."/>
            <person name="Marra M.A."/>
            <person name="Raymond C."/>
            <person name="Haugen E."/>
            <person name="Gillett W."/>
            <person name="Zhou Y."/>
            <person name="James R."/>
            <person name="Phelps K."/>
            <person name="Iadanoto S."/>
            <person name="Bubb K."/>
            <person name="Simms E."/>
            <person name="Levy R."/>
            <person name="Clendenning J."/>
            <person name="Kaul R."/>
            <person name="Kent W.J."/>
            <person name="Furey T.S."/>
            <person name="Baertsch R.A."/>
            <person name="Brent M.R."/>
            <person name="Keibler E."/>
            <person name="Flicek P."/>
            <person name="Bork P."/>
            <person name="Suyama M."/>
            <person name="Bailey J.A."/>
            <person name="Portnoy M.E."/>
            <person name="Torrents D."/>
            <person name="Chinwalla A.T."/>
            <person name="Gish W.R."/>
            <person name="Eddy S.R."/>
            <person name="McPherson J.D."/>
            <person name="Olson M.V."/>
            <person name="Eichler E.E."/>
            <person name="Green E.D."/>
            <person name="Waterston R.H."/>
            <person name="Wilson R.K."/>
        </authorList>
    </citation>
    <scope>NUCLEOTIDE SEQUENCE [LARGE SCALE GENOMIC DNA]</scope>
</reference>
<reference key="4">
    <citation type="journal article" date="2004" name="Genome Res.">
        <title>The status, quality, and expansion of the NIH full-length cDNA project: the Mammalian Gene Collection (MGC).</title>
        <authorList>
            <consortium name="The MGC Project Team"/>
        </authorList>
    </citation>
    <scope>NUCLEOTIDE SEQUENCE [LARGE SCALE MRNA] (ISOFORMS 1 AND 2)</scope>
    <source>
        <tissue>Brain</tissue>
    </source>
</reference>
<reference key="5">
    <citation type="journal article" date="2007" name="BMC Genomics">
        <title>The full-ORF clone resource of the German cDNA consortium.</title>
        <authorList>
            <person name="Bechtel S."/>
            <person name="Rosenfelder H."/>
            <person name="Duda A."/>
            <person name="Schmidt C.P."/>
            <person name="Ernst U."/>
            <person name="Wellenreuther R."/>
            <person name="Mehrle A."/>
            <person name="Schuster C."/>
            <person name="Bahr A."/>
            <person name="Bloecker H."/>
            <person name="Heubner D."/>
            <person name="Hoerlein A."/>
            <person name="Michel G."/>
            <person name="Wedler H."/>
            <person name="Koehrer K."/>
            <person name="Ottenwaelder B."/>
            <person name="Poustka A."/>
            <person name="Wiemann S."/>
            <person name="Schupp I."/>
        </authorList>
    </citation>
    <scope>NUCLEOTIDE SEQUENCE [LARGE SCALE MRNA] OF 1-335 (ISOFORM 1/2)</scope>
    <source>
        <tissue>Testis</tissue>
    </source>
</reference>
<reference key="6">
    <citation type="journal article" date="2020" name="Clin. Genet.">
        <title>Pituitary stalk interruption syndrome broadens the clinical spectrum of the TTC26 ciliopathy.</title>
        <authorList>
            <person name="David O."/>
            <person name="Eskin-Schwartz M."/>
            <person name="Ling G."/>
            <person name="Dolgin V."/>
            <person name="Kristal E."/>
            <person name="Benkowitz E."/>
            <person name="Osyntsov L."/>
            <person name="Gradstein L."/>
            <person name="Birk O.S."/>
            <person name="Loewenthal N."/>
            <person name="Yerushalmi B."/>
        </authorList>
    </citation>
    <scope>INVOLVEMENT IN BRENS</scope>
    <scope>VARIANT BRENS SER-263</scope>
</reference>
<reference key="7">
    <citation type="journal article" date="2020" name="Hepatology">
        <title>Biallelic Mutations in Tetratricopeptide Repeat Domain 26 (Intraflagellar Transport 56) Cause Severe Biliary Ciliopathy in Humans.</title>
        <authorList>
            <person name="Shaheen R."/>
            <person name="Alsahli S."/>
            <person name="Ewida N."/>
            <person name="Alzahrani F."/>
            <person name="Shamseldin H.E."/>
            <person name="Patel N."/>
            <person name="Al Qahtani A."/>
            <person name="Alhebbi H."/>
            <person name="Alhashem A."/>
            <person name="Al-Sheddi T."/>
            <person name="Alomar R."/>
            <person name="Alobeid E."/>
            <person name="Abouelhoda M."/>
            <person name="Monies D."/>
            <person name="Al-Hussaini A."/>
            <person name="Alzouman M.A."/>
            <person name="Shagrani M."/>
            <person name="Faqeih E."/>
            <person name="Alkuraya F.S."/>
        </authorList>
    </citation>
    <scope>VARIANTS BRENS SER-263 AND LEU-444</scope>
    <scope>CHARACTERIZATION OF VARIANT BRENS SER-263</scope>
    <scope>FUNCTION</scope>
</reference>
<keyword id="KW-0025">Alternative splicing</keyword>
<keyword id="KW-0966">Cell projection</keyword>
<keyword id="KW-1186">Ciliopathy</keyword>
<keyword id="KW-0969">Cilium</keyword>
<keyword id="KW-0225">Disease variant</keyword>
<keyword id="KW-0653">Protein transport</keyword>
<keyword id="KW-1267">Proteomics identification</keyword>
<keyword id="KW-1185">Reference proteome</keyword>
<keyword id="KW-0677">Repeat</keyword>
<keyword id="KW-0802">TPR repeat</keyword>
<keyword id="KW-0813">Transport</keyword>
<protein>
    <recommendedName>
        <fullName evidence="7">Intraflagellar transport protein 56</fullName>
    </recommendedName>
    <alternativeName>
        <fullName evidence="8">Tetratricopeptide repeat protein 26</fullName>
        <shortName evidence="8">TPR repeat protein 26</shortName>
    </alternativeName>
</protein>
<name>IFT56_HUMAN</name>
<comment type="function">
    <text evidence="3">Component of the intraflagellar transport (IFT) complex B required for transport of proteins in the motile cilium. Required for transport of specific ciliary cargo proteins related to motility, while it is neither required for IFT complex B assembly or motion nor for cilium assembly. Required for efficient coupling between the accumulation of GLI2 and GLI3 at the ciliary tips and their dissociation from the negative regulator SUFU. Plays a key role in maintaining the integrity of the IFT complex B and the proper ciliary localization of the IFT complex B components. Not required for IFT complex A ciliary localization or function. Essential for maintaining proper microtubule organization within the ciliary axoneme.</text>
</comment>
<comment type="subunit">
    <text evidence="1">Component of the IFT complex B. Interacts with IFT46; the interaction is direct.</text>
</comment>
<comment type="subcellular location">
    <subcellularLocation>
        <location evidence="1">Cell projection</location>
        <location evidence="1">Cilium</location>
    </subcellularLocation>
    <text evidence="1">Localizes at the base to the ciliary transition zone.</text>
</comment>
<comment type="alternative products">
    <event type="alternative splicing"/>
    <isoform>
        <id>A0AVF1-1</id>
        <name>1</name>
        <sequence type="displayed"/>
    </isoform>
    <isoform>
        <id>A0AVF1-2</id>
        <name>2</name>
        <sequence type="described" ref="VSP_043751"/>
    </isoform>
    <isoform>
        <id>A0AVF1-3</id>
        <name>3</name>
        <sequence type="described" ref="VSP_044791"/>
    </isoform>
</comment>
<comment type="disease" evidence="3 4">
    <disease id="DI-06257">
        <name>Biliary, renal, neurologic, and skeletal syndrome</name>
        <acronym>BRENS</acronym>
        <description>An autosomal recessive ciliopathy with multisystemic manifestations including severe neonatal cholestasis that progresses to liver fibrosis and cirrhosis, postaxial polydactyly, hydrocephalus, retinal abnormalities, and situs inversus. Additional features may include congenital cardiac defects, echogenic kidneys with renal failure, ocular abnormalities, joint hyperextensibility, and dysmorphic facial features. Some patients have global developmental delay. Brain imaging typically shows dilated ventricles, hypomyelination, and white matter abnormalities, although some patients have been described with abnormal pituitary development.</description>
        <dbReference type="MIM" id="619534"/>
    </disease>
    <text>The disease is caused by variants affecting the gene represented in this entry.</text>
</comment>
<comment type="similarity">
    <text evidence="7">Belongs to the IFT56 family.</text>
</comment>
<comment type="sequence caution" evidence="7">
    <conflict type="erroneous initiation">
        <sequence resource="EMBL-CDS" id="EAL24039"/>
    </conflict>
    <text>Truncated N-terminus.</text>
</comment>
<organism>
    <name type="scientific">Homo sapiens</name>
    <name type="common">Human</name>
    <dbReference type="NCBI Taxonomy" id="9606"/>
    <lineage>
        <taxon>Eukaryota</taxon>
        <taxon>Metazoa</taxon>
        <taxon>Chordata</taxon>
        <taxon>Craniata</taxon>
        <taxon>Vertebrata</taxon>
        <taxon>Euteleostomi</taxon>
        <taxon>Mammalia</taxon>
        <taxon>Eutheria</taxon>
        <taxon>Euarchontoglires</taxon>
        <taxon>Primates</taxon>
        <taxon>Haplorrhini</taxon>
        <taxon>Catarrhini</taxon>
        <taxon>Hominidae</taxon>
        <taxon>Homo</taxon>
    </lineage>
</organism>
<proteinExistence type="evidence at protein level"/>
<dbReference type="EMBL" id="AK022633">
    <property type="protein sequence ID" value="BAB14143.1"/>
    <property type="molecule type" value="mRNA"/>
</dbReference>
<dbReference type="EMBL" id="AK299132">
    <property type="protein sequence ID" value="BAH12956.1"/>
    <property type="molecule type" value="mRNA"/>
</dbReference>
<dbReference type="EMBL" id="AC009220">
    <property type="status" value="NOT_ANNOTATED_CDS"/>
    <property type="molecule type" value="Genomic_DNA"/>
</dbReference>
<dbReference type="EMBL" id="AC018644">
    <property type="status" value="NOT_ANNOTATED_CDS"/>
    <property type="molecule type" value="Genomic_DNA"/>
</dbReference>
<dbReference type="EMBL" id="CH236950">
    <property type="protein sequence ID" value="EAL24039.1"/>
    <property type="status" value="ALT_INIT"/>
    <property type="molecule type" value="Genomic_DNA"/>
</dbReference>
<dbReference type="EMBL" id="BC126331">
    <property type="protein sequence ID" value="AAI26332.1"/>
    <property type="molecule type" value="mRNA"/>
</dbReference>
<dbReference type="EMBL" id="BC130339">
    <property type="protein sequence ID" value="AAI30340.1"/>
    <property type="molecule type" value="mRNA"/>
</dbReference>
<dbReference type="EMBL" id="BC144151">
    <property type="status" value="NOT_ANNOTATED_CDS"/>
    <property type="molecule type" value="mRNA"/>
</dbReference>
<dbReference type="EMBL" id="AL137393">
    <property type="protein sequence ID" value="CAB70721.2"/>
    <property type="molecule type" value="mRNA"/>
</dbReference>
<dbReference type="CCDS" id="CCDS55172.1">
    <molecule id="A0AVF1-2"/>
</dbReference>
<dbReference type="CCDS" id="CCDS55173.1">
    <molecule id="A0AVF1-3"/>
</dbReference>
<dbReference type="CCDS" id="CCDS5852.1">
    <molecule id="A0AVF1-1"/>
</dbReference>
<dbReference type="PIR" id="T46452">
    <property type="entry name" value="T46452"/>
</dbReference>
<dbReference type="RefSeq" id="NP_001138392.1">
    <molecule id="A0AVF1-2"/>
    <property type="nucleotide sequence ID" value="NM_001144920.3"/>
</dbReference>
<dbReference type="RefSeq" id="NP_001138395.1">
    <molecule id="A0AVF1-3"/>
    <property type="nucleotide sequence ID" value="NM_001144923.3"/>
</dbReference>
<dbReference type="RefSeq" id="NP_079202.2">
    <molecule id="A0AVF1-1"/>
    <property type="nucleotide sequence ID" value="NM_024926.4"/>
</dbReference>
<dbReference type="SMR" id="A0AVF1"/>
<dbReference type="BioGRID" id="123052">
    <property type="interactions" value="97"/>
</dbReference>
<dbReference type="ComplexPortal" id="CPX-5022">
    <property type="entry name" value="Intraflagellar transport complex B"/>
</dbReference>
<dbReference type="CORUM" id="A0AVF1"/>
<dbReference type="FunCoup" id="A0AVF1">
    <property type="interactions" value="351"/>
</dbReference>
<dbReference type="IntAct" id="A0AVF1">
    <property type="interactions" value="43"/>
</dbReference>
<dbReference type="MINT" id="A0AVF1"/>
<dbReference type="STRING" id="9606.ENSP00000419279"/>
<dbReference type="TCDB" id="1.X.1.1.1">
    <property type="family name" value="the intraflagellar transporter-a complex (ift-a) family"/>
</dbReference>
<dbReference type="iPTMnet" id="A0AVF1"/>
<dbReference type="PhosphoSitePlus" id="A0AVF1"/>
<dbReference type="BioMuta" id="TTC26"/>
<dbReference type="jPOST" id="A0AVF1"/>
<dbReference type="MassIVE" id="A0AVF1"/>
<dbReference type="PaxDb" id="9606-ENSP00000419279"/>
<dbReference type="PeptideAtlas" id="A0AVF1"/>
<dbReference type="ProteomicsDB" id="16">
    <molecule id="A0AVF1-1"/>
</dbReference>
<dbReference type="ProteomicsDB" id="17">
    <molecule id="A0AVF1-2"/>
</dbReference>
<dbReference type="ProteomicsDB" id="29874"/>
<dbReference type="Pumba" id="A0AVF1"/>
<dbReference type="Antibodypedia" id="52471">
    <property type="antibodies" value="96 antibodies from 17 providers"/>
</dbReference>
<dbReference type="DNASU" id="79989"/>
<dbReference type="Ensembl" id="ENST00000343187.8">
    <molecule id="A0AVF1-3"/>
    <property type="protein sequence ID" value="ENSP00000339135.4"/>
    <property type="gene ID" value="ENSG00000105948.13"/>
</dbReference>
<dbReference type="Ensembl" id="ENST00000430935.5">
    <molecule id="A0AVF1-2"/>
    <property type="protein sequence ID" value="ENSP00000410655.1"/>
    <property type="gene ID" value="ENSG00000105948.13"/>
</dbReference>
<dbReference type="Ensembl" id="ENST00000464848.5">
    <molecule id="A0AVF1-1"/>
    <property type="protein sequence ID" value="ENSP00000419279.1"/>
    <property type="gene ID" value="ENSG00000105948.13"/>
</dbReference>
<dbReference type="GeneID" id="79989"/>
<dbReference type="KEGG" id="hsa:79989"/>
<dbReference type="MANE-Select" id="ENST00000464848.5">
    <property type="protein sequence ID" value="ENSP00000419279.1"/>
    <property type="RefSeq nucleotide sequence ID" value="NM_024926.4"/>
    <property type="RefSeq protein sequence ID" value="NP_079202.2"/>
</dbReference>
<dbReference type="UCSC" id="uc003vus.4">
    <molecule id="A0AVF1-1"/>
    <property type="organism name" value="human"/>
</dbReference>
<dbReference type="AGR" id="HGNC:21882"/>
<dbReference type="CTD" id="79989"/>
<dbReference type="DisGeNET" id="79989"/>
<dbReference type="GeneCards" id="IFT56"/>
<dbReference type="HGNC" id="HGNC:21882">
    <property type="gene designation" value="IFT56"/>
</dbReference>
<dbReference type="HPA" id="ENSG00000105948">
    <property type="expression patterns" value="Low tissue specificity"/>
</dbReference>
<dbReference type="MalaCards" id="IFT56"/>
<dbReference type="MIM" id="617453">
    <property type="type" value="gene"/>
</dbReference>
<dbReference type="MIM" id="619534">
    <property type="type" value="phenotype"/>
</dbReference>
<dbReference type="neXtProt" id="NX_A0AVF1"/>
<dbReference type="OpenTargets" id="ENSG00000105948"/>
<dbReference type="PharmGKB" id="PA144596245"/>
<dbReference type="VEuPathDB" id="HostDB:ENSG00000105948"/>
<dbReference type="eggNOG" id="KOG3785">
    <property type="taxonomic scope" value="Eukaryota"/>
</dbReference>
<dbReference type="GeneTree" id="ENSGT00390000000159"/>
<dbReference type="HOGENOM" id="CLU_036306_2_0_1"/>
<dbReference type="InParanoid" id="A0AVF1"/>
<dbReference type="OMA" id="FIIRRDY"/>
<dbReference type="OrthoDB" id="95390at2759"/>
<dbReference type="PAN-GO" id="A0AVF1">
    <property type="GO annotations" value="6 GO annotations based on evolutionary models"/>
</dbReference>
<dbReference type="PhylomeDB" id="A0AVF1"/>
<dbReference type="TreeFam" id="TF105816"/>
<dbReference type="PathwayCommons" id="A0AVF1"/>
<dbReference type="Reactome" id="R-HSA-5620924">
    <property type="pathway name" value="Intraflagellar transport"/>
</dbReference>
<dbReference type="SignaLink" id="A0AVF1"/>
<dbReference type="BioGRID-ORCS" id="79989">
    <property type="hits" value="5 hits in 1150 CRISPR screens"/>
</dbReference>
<dbReference type="ChiTaRS" id="TTC26">
    <property type="organism name" value="human"/>
</dbReference>
<dbReference type="GenomeRNAi" id="79989"/>
<dbReference type="Pharos" id="A0AVF1">
    <property type="development level" value="Tbio"/>
</dbReference>
<dbReference type="PRO" id="PR:A0AVF1"/>
<dbReference type="Proteomes" id="UP000005640">
    <property type="component" value="Chromosome 7"/>
</dbReference>
<dbReference type="RNAct" id="A0AVF1">
    <property type="molecule type" value="protein"/>
</dbReference>
<dbReference type="Bgee" id="ENSG00000105948">
    <property type="expression patterns" value="Expressed in bronchial epithelial cell and 120 other cell types or tissues"/>
</dbReference>
<dbReference type="ExpressionAtlas" id="A0AVF1">
    <property type="expression patterns" value="baseline and differential"/>
</dbReference>
<dbReference type="GO" id="GO:0005813">
    <property type="term" value="C:centrosome"/>
    <property type="evidence" value="ECO:0007669"/>
    <property type="project" value="Ensembl"/>
</dbReference>
<dbReference type="GO" id="GO:0036064">
    <property type="term" value="C:ciliary basal body"/>
    <property type="evidence" value="ECO:0000318"/>
    <property type="project" value="GO_Central"/>
</dbReference>
<dbReference type="GO" id="GO:0097546">
    <property type="term" value="C:ciliary base"/>
    <property type="evidence" value="ECO:0000318"/>
    <property type="project" value="GO_Central"/>
</dbReference>
<dbReference type="GO" id="GO:0097542">
    <property type="term" value="C:ciliary tip"/>
    <property type="evidence" value="ECO:0000304"/>
    <property type="project" value="Reactome"/>
</dbReference>
<dbReference type="GO" id="GO:0005929">
    <property type="term" value="C:cilium"/>
    <property type="evidence" value="ECO:0000315"/>
    <property type="project" value="UniProtKB"/>
</dbReference>
<dbReference type="GO" id="GO:0030992">
    <property type="term" value="C:intraciliary transport particle B"/>
    <property type="evidence" value="ECO:0000353"/>
    <property type="project" value="ComplexPortal"/>
</dbReference>
<dbReference type="GO" id="GO:0043005">
    <property type="term" value="C:neuron projection"/>
    <property type="evidence" value="ECO:0007669"/>
    <property type="project" value="Ensembl"/>
</dbReference>
<dbReference type="GO" id="GO:0120170">
    <property type="term" value="F:intraciliary transport particle B binding"/>
    <property type="evidence" value="ECO:0000318"/>
    <property type="project" value="GO_Central"/>
</dbReference>
<dbReference type="GO" id="GO:0035082">
    <property type="term" value="P:axoneme assembly"/>
    <property type="evidence" value="ECO:0000250"/>
    <property type="project" value="UniProtKB"/>
</dbReference>
<dbReference type="GO" id="GO:0060271">
    <property type="term" value="P:cilium assembly"/>
    <property type="evidence" value="ECO:0000315"/>
    <property type="project" value="UniProtKB"/>
</dbReference>
<dbReference type="GO" id="GO:0035720">
    <property type="term" value="P:intraciliary anterograde transport"/>
    <property type="evidence" value="ECO:0000318"/>
    <property type="project" value="GO_Central"/>
</dbReference>
<dbReference type="GO" id="GO:0042073">
    <property type="term" value="P:intraciliary transport"/>
    <property type="evidence" value="ECO:0000250"/>
    <property type="project" value="UniProtKB"/>
</dbReference>
<dbReference type="GO" id="GO:0035735">
    <property type="term" value="P:intraciliary transport involved in cilium assembly"/>
    <property type="evidence" value="ECO:0000318"/>
    <property type="project" value="GO_Central"/>
</dbReference>
<dbReference type="GO" id="GO:1905198">
    <property type="term" value="P:manchette assembly"/>
    <property type="evidence" value="ECO:0007669"/>
    <property type="project" value="Ensembl"/>
</dbReference>
<dbReference type="GO" id="GO:0061512">
    <property type="term" value="P:protein localization to cilium"/>
    <property type="evidence" value="ECO:0000250"/>
    <property type="project" value="UniProtKB"/>
</dbReference>
<dbReference type="GO" id="GO:0015031">
    <property type="term" value="P:protein transport"/>
    <property type="evidence" value="ECO:0007669"/>
    <property type="project" value="UniProtKB-KW"/>
</dbReference>
<dbReference type="GO" id="GO:0007224">
    <property type="term" value="P:smoothened signaling pathway"/>
    <property type="evidence" value="ECO:0000250"/>
    <property type="project" value="UniProtKB"/>
</dbReference>
<dbReference type="FunFam" id="1.25.40.10:FF:000588">
    <property type="entry name" value="Intraflagellar transport protein 56"/>
    <property type="match status" value="1"/>
</dbReference>
<dbReference type="FunFam" id="1.25.40.10:FF:000136">
    <property type="entry name" value="Tetratricopeptide repeat domain 26"/>
    <property type="match status" value="1"/>
</dbReference>
<dbReference type="FunFam" id="1.25.40.10:FF:000271">
    <property type="entry name" value="Tetratricopeptide repeat domain 26"/>
    <property type="match status" value="1"/>
</dbReference>
<dbReference type="Gene3D" id="1.25.40.10">
    <property type="entry name" value="Tetratricopeptide repeat domain"/>
    <property type="match status" value="3"/>
</dbReference>
<dbReference type="InterPro" id="IPR011990">
    <property type="entry name" value="TPR-like_helical_dom_sf"/>
</dbReference>
<dbReference type="InterPro" id="IPR019734">
    <property type="entry name" value="TPR_rpt"/>
</dbReference>
<dbReference type="InterPro" id="IPR030511">
    <property type="entry name" value="TTC26"/>
</dbReference>
<dbReference type="PANTHER" id="PTHR14781">
    <property type="entry name" value="INTRAFLAGELLAR TRANSPORT PROTEIN 56"/>
    <property type="match status" value="1"/>
</dbReference>
<dbReference type="PANTHER" id="PTHR14781:SF0">
    <property type="entry name" value="INTRAFLAGELLAR TRANSPORT PROTEIN 56"/>
    <property type="match status" value="1"/>
</dbReference>
<dbReference type="Pfam" id="PF12895">
    <property type="entry name" value="ANAPC3"/>
    <property type="match status" value="1"/>
</dbReference>
<dbReference type="SMART" id="SM00028">
    <property type="entry name" value="TPR"/>
    <property type="match status" value="5"/>
</dbReference>
<dbReference type="SUPFAM" id="SSF48452">
    <property type="entry name" value="TPR-like"/>
    <property type="match status" value="2"/>
</dbReference>
<dbReference type="PROSITE" id="PS50293">
    <property type="entry name" value="TPR_REGION"/>
    <property type="match status" value="2"/>
</dbReference>
<evidence type="ECO:0000250" key="1">
    <source>
        <dbReference type="UniProtKB" id="Q8BS45"/>
    </source>
</evidence>
<evidence type="ECO:0000256" key="2">
    <source>
        <dbReference type="SAM" id="MobiDB-lite"/>
    </source>
</evidence>
<evidence type="ECO:0000269" key="3">
    <source>
    </source>
</evidence>
<evidence type="ECO:0000269" key="4">
    <source>
    </source>
</evidence>
<evidence type="ECO:0000303" key="5">
    <source>
    </source>
</evidence>
<evidence type="ECO:0000303" key="6">
    <source>
    </source>
</evidence>
<evidence type="ECO:0000305" key="7"/>
<evidence type="ECO:0000312" key="8">
    <source>
        <dbReference type="HGNC" id="HGNC:21882"/>
    </source>
</evidence>
<accession>A0AVF1</accession>
<accession>A4D1S3</accession>
<accession>B7Z5M0</accession>
<accession>C9J2N7</accession>
<accession>F8W724</accession>
<accession>Q9H9S8</accession>
<accession>Q9NTC0</accession>